<proteinExistence type="evidence at transcript level"/>
<comment type="function">
    <text evidence="1 3">Transcriptional activator (By similarity). May be involved in the dorso-ventral patterning of the mesoderm (By similarity).</text>
</comment>
<comment type="subcellular location">
    <subcellularLocation>
        <location evidence="2">Nucleus</location>
    </subcellularLocation>
</comment>
<comment type="tissue specificity">
    <text evidence="6">After the mid-blastula transition, expressed in the dorsolateral mesoderm but not within the dorsal blastopore lip. During gastrulation and neurulation, expressed within the dorsal mesoderm and the lateral border of the neural plate but not within the dorsal midline. In neurula stage embryos, expressed at the border between mesoderm and ectoderm but not within the notochord and neuroectoderm. From stage 25 to stage 32, expressed in branchial arches, head mesenchmye, neural crest cells, tail tip and in two segmented lines of cells bordering the somites. Tail tip expression persists throughout later development. From stage 32, expressed in the ventral abdominal muscle and around the spinal cord. Only weakly expressed in the pronephric tubules.</text>
</comment>
<comment type="developmental stage">
    <text evidence="6">Expression begins after the mid-blastula transition (stage 8-8.5) becoming most abundant during neurulation, then gradually decreasing as development progresses. Expression remains in hatching larvae.</text>
</comment>
<comment type="induction">
    <text evidence="6">By activin and by smad2.</text>
</comment>
<reference evidence="7 8" key="1">
    <citation type="journal article" date="2000" name="Dev. Genes Evol.">
        <title>Activin A signaling directly activates Xenopus winged helix factors XFD-4/4', the orthologues to mammalian MFH-1.</title>
        <authorList>
            <person name="Koester M."/>
            <person name="Dillinger K."/>
            <person name="Knoechel W."/>
        </authorList>
    </citation>
    <scope>NUCLEOTIDE SEQUENCE [GENOMIC DNA]</scope>
    <scope>TISSUE SPECIFICITY</scope>
    <scope>DEVELOPMENTAL STAGE</scope>
    <scope>INDUCTION</scope>
</reference>
<reference key="2">
    <citation type="submission" date="2008-11" db="EMBL/GenBank/DDBJ databases">
        <authorList>
            <consortium name="NIH - Xenopus Gene Collection (XGC) project"/>
        </authorList>
    </citation>
    <scope>NUCLEOTIDE SEQUENCE [LARGE SCALE MRNA]</scope>
</reference>
<reference evidence="7" key="3">
    <citation type="journal article" date="1994" name="Nucleic Acids Res.">
        <title>Novel HOX, POU and FKH genes expressed during bFGF-induced mesodermal differentiation in Xenopus.</title>
        <authorList>
            <person name="King M.W."/>
            <person name="Moore M.J."/>
        </authorList>
    </citation>
    <scope>IDENTIFICATION</scope>
</reference>
<reference evidence="7" key="4">
    <citation type="journal article" date="2005" name="Gene">
        <title>Of fox and frogs: fox (fork head/winged helix) transcription factors in Xenopus development.</title>
        <authorList>
            <person name="Pohl B.S."/>
            <person name="Knoechel W."/>
        </authorList>
    </citation>
    <scope>REVIEW</scope>
</reference>
<organism>
    <name type="scientific">Xenopus laevis</name>
    <name type="common">African clawed frog</name>
    <dbReference type="NCBI Taxonomy" id="8355"/>
    <lineage>
        <taxon>Eukaryota</taxon>
        <taxon>Metazoa</taxon>
        <taxon>Chordata</taxon>
        <taxon>Craniata</taxon>
        <taxon>Vertebrata</taxon>
        <taxon>Euteleostomi</taxon>
        <taxon>Amphibia</taxon>
        <taxon>Batrachia</taxon>
        <taxon>Anura</taxon>
        <taxon>Pipoidea</taxon>
        <taxon>Pipidae</taxon>
        <taxon>Xenopodinae</taxon>
        <taxon>Xenopus</taxon>
        <taxon>Xenopus</taxon>
    </lineage>
</organism>
<feature type="chain" id="PRO_0000250439" description="Forkhead box protein C2-B">
    <location>
        <begin position="1"/>
        <end position="461"/>
    </location>
</feature>
<feature type="DNA-binding region" description="Fork-head" evidence="4">
    <location>
        <begin position="72"/>
        <end position="166"/>
    </location>
</feature>
<feature type="region of interest" description="Disordered" evidence="5">
    <location>
        <begin position="166"/>
        <end position="194"/>
    </location>
</feature>
<feature type="region of interest" description="Disordered" evidence="5">
    <location>
        <begin position="221"/>
        <end position="258"/>
    </location>
</feature>
<feature type="region of interest" description="Disordered" evidence="5">
    <location>
        <begin position="341"/>
        <end position="380"/>
    </location>
</feature>
<feature type="compositionally biased region" description="Basic and acidic residues" evidence="5">
    <location>
        <begin position="171"/>
        <end position="186"/>
    </location>
</feature>
<feature type="compositionally biased region" description="Polar residues" evidence="5">
    <location>
        <begin position="230"/>
        <end position="258"/>
    </location>
</feature>
<feature type="compositionally biased region" description="Polar residues" evidence="5">
    <location>
        <begin position="352"/>
        <end position="379"/>
    </location>
</feature>
<feature type="sequence conflict" description="In Ref. 1; CAB54144." evidence="7" ref="1">
    <original>I</original>
    <variation>S</variation>
    <location>
        <position position="264"/>
    </location>
</feature>
<feature type="sequence conflict" description="In Ref. 1; CAB54144." evidence="7" ref="1">
    <original>L</original>
    <variation>R</variation>
    <location>
        <position position="267"/>
    </location>
</feature>
<gene>
    <name type="primary">foxc2-b</name>
</gene>
<accession>Q9PVY8</accession>
<accession>B7ZRJ9</accession>
<evidence type="ECO:0000250" key="1">
    <source>
        <dbReference type="UniProtKB" id="Q61850"/>
    </source>
</evidence>
<evidence type="ECO:0000250" key="2">
    <source>
        <dbReference type="UniProtKB" id="Q99958"/>
    </source>
</evidence>
<evidence type="ECO:0000250" key="3">
    <source>
        <dbReference type="UniProtKB" id="Q9PVY9"/>
    </source>
</evidence>
<evidence type="ECO:0000255" key="4">
    <source>
        <dbReference type="PROSITE-ProRule" id="PRU00089"/>
    </source>
</evidence>
<evidence type="ECO:0000256" key="5">
    <source>
        <dbReference type="SAM" id="MobiDB-lite"/>
    </source>
</evidence>
<evidence type="ECO:0000269" key="6">
    <source>
    </source>
</evidence>
<evidence type="ECO:0000305" key="7"/>
<evidence type="ECO:0000312" key="8">
    <source>
        <dbReference type="EMBL" id="CAB54144.1"/>
    </source>
</evidence>
<dbReference type="EMBL" id="AJ249225">
    <property type="protein sequence ID" value="CAB54144.1"/>
    <property type="molecule type" value="mRNA"/>
</dbReference>
<dbReference type="EMBL" id="BC170193">
    <property type="protein sequence ID" value="AAI70193.1"/>
    <property type="molecule type" value="mRNA"/>
</dbReference>
<dbReference type="EMBL" id="BC170195">
    <property type="protein sequence ID" value="AAI70195.1"/>
    <property type="molecule type" value="mRNA"/>
</dbReference>
<dbReference type="SMR" id="Q9PVY8"/>
<dbReference type="GeneID" id="399191"/>
<dbReference type="KEGG" id="xla:399191"/>
<dbReference type="AGR" id="Xenbase:XB-GENE-6254394"/>
<dbReference type="CTD" id="399191"/>
<dbReference type="Xenbase" id="XB-GENE-6254394">
    <property type="gene designation" value="foxc2.S"/>
</dbReference>
<dbReference type="OrthoDB" id="5954824at2759"/>
<dbReference type="Proteomes" id="UP000186698">
    <property type="component" value="Chromosome 4S"/>
</dbReference>
<dbReference type="Bgee" id="399191">
    <property type="expression patterns" value="Expressed in internal ear and 7 other cell types or tissues"/>
</dbReference>
<dbReference type="GO" id="GO:0005634">
    <property type="term" value="C:nucleus"/>
    <property type="evidence" value="ECO:0000303"/>
    <property type="project" value="UniProtKB"/>
</dbReference>
<dbReference type="GO" id="GO:0003677">
    <property type="term" value="F:DNA binding"/>
    <property type="evidence" value="ECO:0000303"/>
    <property type="project" value="UniProtKB"/>
</dbReference>
<dbReference type="GO" id="GO:0003700">
    <property type="term" value="F:DNA-binding transcription factor activity"/>
    <property type="evidence" value="ECO:0000250"/>
    <property type="project" value="UniProtKB"/>
</dbReference>
<dbReference type="GO" id="GO:0000981">
    <property type="term" value="F:DNA-binding transcription factor activity, RNA polymerase II-specific"/>
    <property type="evidence" value="ECO:0000318"/>
    <property type="project" value="GO_Central"/>
</dbReference>
<dbReference type="GO" id="GO:1990841">
    <property type="term" value="F:promoter-specific chromatin binding"/>
    <property type="evidence" value="ECO:0000250"/>
    <property type="project" value="UniProtKB"/>
</dbReference>
<dbReference type="GO" id="GO:0000978">
    <property type="term" value="F:RNA polymerase II cis-regulatory region sequence-specific DNA binding"/>
    <property type="evidence" value="ECO:0000318"/>
    <property type="project" value="GO_Central"/>
</dbReference>
<dbReference type="GO" id="GO:0009653">
    <property type="term" value="P:anatomical structure morphogenesis"/>
    <property type="evidence" value="ECO:0000318"/>
    <property type="project" value="GO_Central"/>
</dbReference>
<dbReference type="GO" id="GO:0030154">
    <property type="term" value="P:cell differentiation"/>
    <property type="evidence" value="ECO:0000318"/>
    <property type="project" value="GO_Central"/>
</dbReference>
<dbReference type="GO" id="GO:0007498">
    <property type="term" value="P:mesoderm development"/>
    <property type="evidence" value="ECO:0000250"/>
    <property type="project" value="UniProtKB"/>
</dbReference>
<dbReference type="GO" id="GO:0045893">
    <property type="term" value="P:positive regulation of DNA-templated transcription"/>
    <property type="evidence" value="ECO:0000250"/>
    <property type="project" value="UniProtKB"/>
</dbReference>
<dbReference type="GO" id="GO:0045944">
    <property type="term" value="P:positive regulation of transcription by RNA polymerase II"/>
    <property type="evidence" value="ECO:0000250"/>
    <property type="project" value="UniProtKB"/>
</dbReference>
<dbReference type="GO" id="GO:0006355">
    <property type="term" value="P:regulation of DNA-templated transcription"/>
    <property type="evidence" value="ECO:0000303"/>
    <property type="project" value="UniProtKB"/>
</dbReference>
<dbReference type="GO" id="GO:0006357">
    <property type="term" value="P:regulation of transcription by RNA polymerase II"/>
    <property type="evidence" value="ECO:0000318"/>
    <property type="project" value="GO_Central"/>
</dbReference>
<dbReference type="CDD" id="cd20044">
    <property type="entry name" value="FH_FOXC1"/>
    <property type="match status" value="1"/>
</dbReference>
<dbReference type="FunFam" id="1.10.10.10:FF:000016">
    <property type="entry name" value="Forkhead box protein I1"/>
    <property type="match status" value="1"/>
</dbReference>
<dbReference type="Gene3D" id="1.10.10.10">
    <property type="entry name" value="Winged helix-like DNA-binding domain superfamily/Winged helix DNA-binding domain"/>
    <property type="match status" value="1"/>
</dbReference>
<dbReference type="InterPro" id="IPR001766">
    <property type="entry name" value="Fork_head_dom"/>
</dbReference>
<dbReference type="InterPro" id="IPR050211">
    <property type="entry name" value="FOX_domain-containing"/>
</dbReference>
<dbReference type="InterPro" id="IPR047391">
    <property type="entry name" value="FOXC1/C2-like_FH"/>
</dbReference>
<dbReference type="InterPro" id="IPR018122">
    <property type="entry name" value="TF_fork_head_CS_1"/>
</dbReference>
<dbReference type="InterPro" id="IPR030456">
    <property type="entry name" value="TF_fork_head_CS_2"/>
</dbReference>
<dbReference type="InterPro" id="IPR036388">
    <property type="entry name" value="WH-like_DNA-bd_sf"/>
</dbReference>
<dbReference type="InterPro" id="IPR036390">
    <property type="entry name" value="WH_DNA-bd_sf"/>
</dbReference>
<dbReference type="PANTHER" id="PTHR11829">
    <property type="entry name" value="FORKHEAD BOX PROTEIN"/>
    <property type="match status" value="1"/>
</dbReference>
<dbReference type="PANTHER" id="PTHR11829:SF68">
    <property type="entry name" value="FORKHEAD BOX PROTEIN C1"/>
    <property type="match status" value="1"/>
</dbReference>
<dbReference type="Pfam" id="PF00250">
    <property type="entry name" value="Forkhead"/>
    <property type="match status" value="1"/>
</dbReference>
<dbReference type="PRINTS" id="PR00053">
    <property type="entry name" value="FORKHEAD"/>
</dbReference>
<dbReference type="SMART" id="SM00339">
    <property type="entry name" value="FH"/>
    <property type="match status" value="1"/>
</dbReference>
<dbReference type="SUPFAM" id="SSF46785">
    <property type="entry name" value="Winged helix' DNA-binding domain"/>
    <property type="match status" value="1"/>
</dbReference>
<dbReference type="PROSITE" id="PS00657">
    <property type="entry name" value="FORK_HEAD_1"/>
    <property type="match status" value="1"/>
</dbReference>
<dbReference type="PROSITE" id="PS00658">
    <property type="entry name" value="FORK_HEAD_2"/>
    <property type="match status" value="1"/>
</dbReference>
<dbReference type="PROSITE" id="PS50039">
    <property type="entry name" value="FORK_HEAD_3"/>
    <property type="match status" value="1"/>
</dbReference>
<sequence length="461" mass="51145">MMQARYSVADPNALGVVPYLSEQNYYRAAGTYGSMATPMSVYPAHEQYTPAMARSYGPYHHHQQAAPKDLVKPPYSYIALITMAIQNAPDKKITLNGIYQFIMDRFPFYRENKQGWQNSIRHNLSLNECFVKVPRDDKKPGKGSYWSLDPDSYNMFENGSFLRRRRRFKKKDASREKEDRLLKDQGKVQGPVPSLELPKHEKKIIIKSESPELPVITKVENLSPGGGSAMQDSPRSVASTPSVSTDSSIPEQHPASNGFSVDNIMTLRTSPHGDLSPVPAIPCRTAMVSSLPINYTAHTQSSVYSQACTQSMDTSGSFQCSMRAMSLYTGDRPSHMCAPSTLEEATSEHHNGTSSPLNSMSQESVLTSSHHQQTATGGQTAAPWYLNPGADIGHLSGHNFGSQQQTFPNVREMFNSHRLGIESSALSEHQVSGNTNCQIPYRSAPSIYRHSSPYAYDCTKY</sequence>
<keyword id="KW-0010">Activator</keyword>
<keyword id="KW-0217">Developmental protein</keyword>
<keyword id="KW-0238">DNA-binding</keyword>
<keyword id="KW-0539">Nucleus</keyword>
<keyword id="KW-1185">Reference proteome</keyword>
<keyword id="KW-0804">Transcription</keyword>
<keyword id="KW-0805">Transcription regulation</keyword>
<protein>
    <recommendedName>
        <fullName>Forkhead box protein C2-B</fullName>
        <shortName>FoxC2-B</shortName>
        <shortName>FoxC2b</shortName>
    </recommendedName>
    <alternativeName>
        <fullName>Fork head domain-related protein 4'</fullName>
        <shortName>FD-4'</shortName>
        <shortName>xFD-4'</shortName>
        <shortName>xFD4 B</shortName>
    </alternativeName>
</protein>
<name>FXC2B_XENLA</name>